<dbReference type="EC" id="3.13.2.1" evidence="1"/>
<dbReference type="EMBL" id="CP000733">
    <property type="protein sequence ID" value="ABS76996.2"/>
    <property type="molecule type" value="Genomic_DNA"/>
</dbReference>
<dbReference type="RefSeq" id="WP_011997437.1">
    <property type="nucleotide sequence ID" value="NC_009727.1"/>
</dbReference>
<dbReference type="SMR" id="A9KD88"/>
<dbReference type="KEGG" id="cbd:CBUD_2132"/>
<dbReference type="HOGENOM" id="CLU_025194_2_1_6"/>
<dbReference type="UniPathway" id="UPA00314">
    <property type="reaction ID" value="UER00076"/>
</dbReference>
<dbReference type="Proteomes" id="UP000008555">
    <property type="component" value="Chromosome"/>
</dbReference>
<dbReference type="GO" id="GO:0005829">
    <property type="term" value="C:cytosol"/>
    <property type="evidence" value="ECO:0007669"/>
    <property type="project" value="TreeGrafter"/>
</dbReference>
<dbReference type="GO" id="GO:0004013">
    <property type="term" value="F:adenosylhomocysteinase activity"/>
    <property type="evidence" value="ECO:0007669"/>
    <property type="project" value="UniProtKB-UniRule"/>
</dbReference>
<dbReference type="GO" id="GO:0071269">
    <property type="term" value="P:L-homocysteine biosynthetic process"/>
    <property type="evidence" value="ECO:0007669"/>
    <property type="project" value="UniProtKB-UniRule"/>
</dbReference>
<dbReference type="GO" id="GO:0006730">
    <property type="term" value="P:one-carbon metabolic process"/>
    <property type="evidence" value="ECO:0007669"/>
    <property type="project" value="UniProtKB-KW"/>
</dbReference>
<dbReference type="GO" id="GO:0033353">
    <property type="term" value="P:S-adenosylmethionine cycle"/>
    <property type="evidence" value="ECO:0007669"/>
    <property type="project" value="TreeGrafter"/>
</dbReference>
<dbReference type="CDD" id="cd00401">
    <property type="entry name" value="SAHH"/>
    <property type="match status" value="1"/>
</dbReference>
<dbReference type="FunFam" id="3.40.50.1480:FF:000006">
    <property type="entry name" value="Adenosylhomocysteinase"/>
    <property type="match status" value="1"/>
</dbReference>
<dbReference type="FunFam" id="3.40.50.720:FF:000004">
    <property type="entry name" value="Adenosylhomocysteinase"/>
    <property type="match status" value="1"/>
</dbReference>
<dbReference type="Gene3D" id="3.40.50.1480">
    <property type="entry name" value="Adenosylhomocysteinase-like"/>
    <property type="match status" value="3"/>
</dbReference>
<dbReference type="Gene3D" id="3.40.50.720">
    <property type="entry name" value="NAD(P)-binding Rossmann-like Domain"/>
    <property type="match status" value="1"/>
</dbReference>
<dbReference type="HAMAP" id="MF_00563">
    <property type="entry name" value="AdoHcyase"/>
    <property type="match status" value="1"/>
</dbReference>
<dbReference type="InterPro" id="IPR042172">
    <property type="entry name" value="Adenosylhomocyst_ase-like_sf"/>
</dbReference>
<dbReference type="InterPro" id="IPR000043">
    <property type="entry name" value="Adenosylhomocysteinase-like"/>
</dbReference>
<dbReference type="InterPro" id="IPR015878">
    <property type="entry name" value="Ado_hCys_hydrolase_NAD-bd"/>
</dbReference>
<dbReference type="InterPro" id="IPR036291">
    <property type="entry name" value="NAD(P)-bd_dom_sf"/>
</dbReference>
<dbReference type="InterPro" id="IPR020082">
    <property type="entry name" value="S-Ado-L-homoCys_hydrolase_CS"/>
</dbReference>
<dbReference type="NCBIfam" id="TIGR00936">
    <property type="entry name" value="ahcY"/>
    <property type="match status" value="1"/>
</dbReference>
<dbReference type="NCBIfam" id="NF004005">
    <property type="entry name" value="PRK05476.2-3"/>
    <property type="match status" value="1"/>
</dbReference>
<dbReference type="PANTHER" id="PTHR23420">
    <property type="entry name" value="ADENOSYLHOMOCYSTEINASE"/>
    <property type="match status" value="1"/>
</dbReference>
<dbReference type="PANTHER" id="PTHR23420:SF0">
    <property type="entry name" value="ADENOSYLHOMOCYSTEINASE"/>
    <property type="match status" value="1"/>
</dbReference>
<dbReference type="Pfam" id="PF05221">
    <property type="entry name" value="AdoHcyase"/>
    <property type="match status" value="2"/>
</dbReference>
<dbReference type="Pfam" id="PF00670">
    <property type="entry name" value="AdoHcyase_NAD"/>
    <property type="match status" value="1"/>
</dbReference>
<dbReference type="PIRSF" id="PIRSF001109">
    <property type="entry name" value="Ad_hcy_hydrolase"/>
    <property type="match status" value="1"/>
</dbReference>
<dbReference type="SMART" id="SM00996">
    <property type="entry name" value="AdoHcyase"/>
    <property type="match status" value="1"/>
</dbReference>
<dbReference type="SMART" id="SM00997">
    <property type="entry name" value="AdoHcyase_NAD"/>
    <property type="match status" value="1"/>
</dbReference>
<dbReference type="SUPFAM" id="SSF52283">
    <property type="entry name" value="Formate/glycerate dehydrogenase catalytic domain-like"/>
    <property type="match status" value="1"/>
</dbReference>
<dbReference type="SUPFAM" id="SSF51735">
    <property type="entry name" value="NAD(P)-binding Rossmann-fold domains"/>
    <property type="match status" value="1"/>
</dbReference>
<dbReference type="PROSITE" id="PS00738">
    <property type="entry name" value="ADOHCYASE_1"/>
    <property type="match status" value="1"/>
</dbReference>
<dbReference type="PROSITE" id="PS00739">
    <property type="entry name" value="ADOHCYASE_2"/>
    <property type="match status" value="1"/>
</dbReference>
<feature type="chain" id="PRO_1000129279" description="Adenosylhomocysteinase">
    <location>
        <begin position="1"/>
        <end position="438"/>
    </location>
</feature>
<feature type="binding site" evidence="1">
    <location>
        <position position="64"/>
    </location>
    <ligand>
        <name>substrate</name>
    </ligand>
</feature>
<feature type="binding site" evidence="1">
    <location>
        <position position="139"/>
    </location>
    <ligand>
        <name>substrate</name>
    </ligand>
</feature>
<feature type="binding site" evidence="1">
    <location>
        <position position="164"/>
    </location>
    <ligand>
        <name>substrate</name>
    </ligand>
</feature>
<feature type="binding site" evidence="1">
    <location>
        <begin position="165"/>
        <end position="167"/>
    </location>
    <ligand>
        <name>NAD(+)</name>
        <dbReference type="ChEBI" id="CHEBI:57540"/>
    </ligand>
</feature>
<feature type="binding site" evidence="1">
    <location>
        <position position="194"/>
    </location>
    <ligand>
        <name>substrate</name>
    </ligand>
</feature>
<feature type="binding site" evidence="1">
    <location>
        <position position="198"/>
    </location>
    <ligand>
        <name>substrate</name>
    </ligand>
</feature>
<feature type="binding site" evidence="1">
    <location>
        <position position="199"/>
    </location>
    <ligand>
        <name>NAD(+)</name>
        <dbReference type="ChEBI" id="CHEBI:57540"/>
    </ligand>
</feature>
<feature type="binding site" evidence="1">
    <location>
        <begin position="228"/>
        <end position="233"/>
    </location>
    <ligand>
        <name>NAD(+)</name>
        <dbReference type="ChEBI" id="CHEBI:57540"/>
    </ligand>
</feature>
<feature type="binding site" evidence="1">
    <location>
        <position position="251"/>
    </location>
    <ligand>
        <name>NAD(+)</name>
        <dbReference type="ChEBI" id="CHEBI:57540"/>
    </ligand>
</feature>
<feature type="binding site" evidence="1">
    <location>
        <position position="286"/>
    </location>
    <ligand>
        <name>NAD(+)</name>
        <dbReference type="ChEBI" id="CHEBI:57540"/>
    </ligand>
</feature>
<feature type="binding site" evidence="1">
    <location>
        <begin position="307"/>
        <end position="309"/>
    </location>
    <ligand>
        <name>NAD(+)</name>
        <dbReference type="ChEBI" id="CHEBI:57540"/>
    </ligand>
</feature>
<feature type="binding site" evidence="1">
    <location>
        <position position="352"/>
    </location>
    <ligand>
        <name>NAD(+)</name>
        <dbReference type="ChEBI" id="CHEBI:57540"/>
    </ligand>
</feature>
<organism>
    <name type="scientific">Coxiella burnetii (strain Dugway 5J108-111)</name>
    <dbReference type="NCBI Taxonomy" id="434922"/>
    <lineage>
        <taxon>Bacteria</taxon>
        <taxon>Pseudomonadati</taxon>
        <taxon>Pseudomonadota</taxon>
        <taxon>Gammaproteobacteria</taxon>
        <taxon>Legionellales</taxon>
        <taxon>Coxiellaceae</taxon>
        <taxon>Coxiella</taxon>
    </lineage>
</organism>
<gene>
    <name evidence="1" type="primary">ahcY</name>
    <name type="ordered locus">CBUD_2132</name>
</gene>
<keyword id="KW-0963">Cytoplasm</keyword>
<keyword id="KW-0378">Hydrolase</keyword>
<keyword id="KW-0520">NAD</keyword>
<keyword id="KW-0554">One-carbon metabolism</keyword>
<evidence type="ECO:0000255" key="1">
    <source>
        <dbReference type="HAMAP-Rule" id="MF_00563"/>
    </source>
</evidence>
<protein>
    <recommendedName>
        <fullName evidence="1">Adenosylhomocysteinase</fullName>
        <ecNumber evidence="1">3.13.2.1</ecNumber>
    </recommendedName>
    <alternativeName>
        <fullName evidence="1">S-adenosyl-L-homocysteine hydrolase</fullName>
        <shortName evidence="1">AdoHcyase</shortName>
    </alternativeName>
</protein>
<proteinExistence type="inferred from homology"/>
<name>SAHH_COXBN</name>
<sequence length="438" mass="48882">MENDMETATMTQDYHIANINLADWGRKEIEIAETEMPGLMALRKKYKNAKPLKGARIAGCIHMTIQTAVLIETLMLLGAEVRWSSCNIFSTQDHAAAALAQKGIPIFAWKGETEEEYWRCIASTLEGPKGWTPNLLLDDGGDLTAHTLQKHPELCQNIRGVSEETTTGVHRLYRMLKEGSLKFPAINVNDSVTKSKFDNLYGCRESLIDSIKRATDVMIAGKRVVVCGYGDVGKGCAQSLRAYGATVYITEIDPICALQAAMEGYRVVTMDEMADSADIFVTATGNTDIITHEHMLKMKDQAIVCNIGHFDNEIDIASLQDYQWMNIKPQVDQVIFPDGKRLTVLAQGRLVNLGCATGHPSFVMSNSFTNQVLAQIELWQYPEKYPIGVYVLPKHLDEEVARLHLERVGAKLTTLTEKQADYIGVDPEGPFKSEHYRY</sequence>
<accession>A9KD88</accession>
<comment type="function">
    <text evidence="1">May play a key role in the regulation of the intracellular concentration of adenosylhomocysteine.</text>
</comment>
<comment type="catalytic activity">
    <reaction evidence="1">
        <text>S-adenosyl-L-homocysteine + H2O = L-homocysteine + adenosine</text>
        <dbReference type="Rhea" id="RHEA:21708"/>
        <dbReference type="ChEBI" id="CHEBI:15377"/>
        <dbReference type="ChEBI" id="CHEBI:16335"/>
        <dbReference type="ChEBI" id="CHEBI:57856"/>
        <dbReference type="ChEBI" id="CHEBI:58199"/>
        <dbReference type="EC" id="3.13.2.1"/>
    </reaction>
</comment>
<comment type="cofactor">
    <cofactor evidence="1">
        <name>NAD(+)</name>
        <dbReference type="ChEBI" id="CHEBI:57540"/>
    </cofactor>
    <text evidence="1">Binds 1 NAD(+) per subunit.</text>
</comment>
<comment type="pathway">
    <text evidence="1">Amino-acid biosynthesis; L-homocysteine biosynthesis; L-homocysteine from S-adenosyl-L-homocysteine: step 1/1.</text>
</comment>
<comment type="subcellular location">
    <subcellularLocation>
        <location evidence="1">Cytoplasm</location>
    </subcellularLocation>
</comment>
<comment type="similarity">
    <text evidence="1">Belongs to the adenosylhomocysteinase family.</text>
</comment>
<reference key="1">
    <citation type="journal article" date="2009" name="Infect. Immun.">
        <title>Comparative genomics reveal extensive transposon-mediated genomic plasticity and diversity among potential effector proteins within the genus Coxiella.</title>
        <authorList>
            <person name="Beare P.A."/>
            <person name="Unsworth N."/>
            <person name="Andoh M."/>
            <person name="Voth D.E."/>
            <person name="Omsland A."/>
            <person name="Gilk S.D."/>
            <person name="Williams K.P."/>
            <person name="Sobral B.W."/>
            <person name="Kupko J.J. III"/>
            <person name="Porcella S.F."/>
            <person name="Samuel J.E."/>
            <person name="Heinzen R.A."/>
        </authorList>
    </citation>
    <scope>NUCLEOTIDE SEQUENCE [LARGE SCALE GENOMIC DNA]</scope>
    <source>
        <strain>Dugway 5J108-111</strain>
    </source>
</reference>